<comment type="function">
    <text evidence="1">Involved in the transport of maltose and maltodextrins.</text>
</comment>
<comment type="catalytic activity">
    <reaction evidence="1">
        <text>beta-maltose(in) = beta-maltose(out)</text>
        <dbReference type="Rhea" id="RHEA:29731"/>
        <dbReference type="ChEBI" id="CHEBI:18147"/>
    </reaction>
</comment>
<comment type="subunit">
    <text evidence="1">Homotrimer formed of three 18-stranded antiparallel beta-barrels, containing three independent channels.</text>
</comment>
<comment type="subcellular location">
    <subcellularLocation>
        <location evidence="1">Cell outer membrane</location>
        <topology evidence="1">Multi-pass membrane protein</topology>
    </subcellularLocation>
</comment>
<comment type="induction">
    <text evidence="1">By maltose.</text>
</comment>
<comment type="similarity">
    <text evidence="1">Belongs to the porin LamB (TC 1.B.3) family.</text>
</comment>
<name>LAMB_SALPC</name>
<dbReference type="EMBL" id="CP000857">
    <property type="protein sequence ID" value="ACN48355.1"/>
    <property type="molecule type" value="Genomic_DNA"/>
</dbReference>
<dbReference type="RefSeq" id="WP_000973642.1">
    <property type="nucleotide sequence ID" value="NC_012125.1"/>
</dbReference>
<dbReference type="SMR" id="C0Q4D6"/>
<dbReference type="KEGG" id="sei:SPC_4292"/>
<dbReference type="HOGENOM" id="CLU_032473_4_1_6"/>
<dbReference type="Proteomes" id="UP000001599">
    <property type="component" value="Chromosome"/>
</dbReference>
<dbReference type="GO" id="GO:0009279">
    <property type="term" value="C:cell outer membrane"/>
    <property type="evidence" value="ECO:0007669"/>
    <property type="project" value="UniProtKB-SubCell"/>
</dbReference>
<dbReference type="GO" id="GO:0046930">
    <property type="term" value="C:pore complex"/>
    <property type="evidence" value="ECO:0007669"/>
    <property type="project" value="UniProtKB-KW"/>
</dbReference>
<dbReference type="GO" id="GO:0042958">
    <property type="term" value="F:maltodextrin transmembrane transporter activity"/>
    <property type="evidence" value="ECO:0007669"/>
    <property type="project" value="InterPro"/>
</dbReference>
<dbReference type="GO" id="GO:0015481">
    <property type="term" value="F:maltose transporting porin activity"/>
    <property type="evidence" value="ECO:0007669"/>
    <property type="project" value="InterPro"/>
</dbReference>
<dbReference type="GO" id="GO:0006811">
    <property type="term" value="P:monoatomic ion transport"/>
    <property type="evidence" value="ECO:0007669"/>
    <property type="project" value="UniProtKB-KW"/>
</dbReference>
<dbReference type="CDD" id="cd01346">
    <property type="entry name" value="Maltoporin-like"/>
    <property type="match status" value="1"/>
</dbReference>
<dbReference type="FunFam" id="2.40.170.10:FF:000001">
    <property type="entry name" value="Maltoporin"/>
    <property type="match status" value="1"/>
</dbReference>
<dbReference type="Gene3D" id="2.40.170.10">
    <property type="entry name" value="Porin, LamB type"/>
    <property type="match status" value="1"/>
</dbReference>
<dbReference type="HAMAP" id="MF_01301">
    <property type="entry name" value="LamB"/>
    <property type="match status" value="1"/>
</dbReference>
<dbReference type="InterPro" id="IPR050286">
    <property type="entry name" value="G_neg_Bact_CarbUptk_Porin"/>
</dbReference>
<dbReference type="InterPro" id="IPR023738">
    <property type="entry name" value="Maltoporin"/>
</dbReference>
<dbReference type="InterPro" id="IPR003192">
    <property type="entry name" value="Porin_LamB"/>
</dbReference>
<dbReference type="InterPro" id="IPR036998">
    <property type="entry name" value="Porin_LamB_sf"/>
</dbReference>
<dbReference type="NCBIfam" id="NF006860">
    <property type="entry name" value="PRK09360.1"/>
    <property type="match status" value="1"/>
</dbReference>
<dbReference type="PANTHER" id="PTHR38762">
    <property type="entry name" value="CRYPTIC OUTER MEMBRANE PORIN BGLH-RELATED"/>
    <property type="match status" value="1"/>
</dbReference>
<dbReference type="PANTHER" id="PTHR38762:SF1">
    <property type="entry name" value="CRYPTIC OUTER MEMBRANE PORIN BGLH-RELATED"/>
    <property type="match status" value="1"/>
</dbReference>
<dbReference type="Pfam" id="PF02264">
    <property type="entry name" value="LamB"/>
    <property type="match status" value="1"/>
</dbReference>
<dbReference type="SUPFAM" id="SSF56935">
    <property type="entry name" value="Porins"/>
    <property type="match status" value="1"/>
</dbReference>
<accession>C0Q4D6</accession>
<gene>
    <name evidence="1" type="primary">lamB</name>
    <name type="ordered locus">SPC_4292</name>
</gene>
<organism>
    <name type="scientific">Salmonella paratyphi C (strain RKS4594)</name>
    <dbReference type="NCBI Taxonomy" id="476213"/>
    <lineage>
        <taxon>Bacteria</taxon>
        <taxon>Pseudomonadati</taxon>
        <taxon>Pseudomonadota</taxon>
        <taxon>Gammaproteobacteria</taxon>
        <taxon>Enterobacterales</taxon>
        <taxon>Enterobacteriaceae</taxon>
        <taxon>Salmonella</taxon>
    </lineage>
</organism>
<reference key="1">
    <citation type="journal article" date="2009" name="PLoS ONE">
        <title>Salmonella paratyphi C: genetic divergence from Salmonella choleraesuis and pathogenic convergence with Salmonella typhi.</title>
        <authorList>
            <person name="Liu W.-Q."/>
            <person name="Feng Y."/>
            <person name="Wang Y."/>
            <person name="Zou Q.-H."/>
            <person name="Chen F."/>
            <person name="Guo J.-T."/>
            <person name="Peng Y.-H."/>
            <person name="Jin Y."/>
            <person name="Li Y.-G."/>
            <person name="Hu S.-N."/>
            <person name="Johnston R.N."/>
            <person name="Liu G.-R."/>
            <person name="Liu S.-L."/>
        </authorList>
    </citation>
    <scope>NUCLEOTIDE SEQUENCE [LARGE SCALE GENOMIC DNA]</scope>
    <source>
        <strain>RKS4594</strain>
    </source>
</reference>
<protein>
    <recommendedName>
        <fullName evidence="1">Maltoporin</fullName>
    </recommendedName>
    <alternativeName>
        <fullName evidence="1">Maltose-inducible porin</fullName>
    </alternativeName>
</protein>
<sequence>MMITLRKLPLAVAVAAGVMSAQAMAVDFHGYARSGIGWTGSGGEQQCFQATGAQSKYRLGNECETYAELKLGQEVWKEGDKSFYFDTNVAYSVNQQNDWESTDPAFREANVQGKNLIEWLPGSTIWAGKRFYQRHDVHMIDFYYWDISGPGAGIENIDLGFGKLSLAATRSTEAGGSYTFSSQNIYDEVKDTANDVFDVRLAGLQTNPDGVLELGVDYGRANTTDGYKLADGASKDGWMFTAEHTQSMLKGYNKFVVQYATDAMTTQGKGQARGSDGSSSFTEELPDGTKINYANKVINNNGDMWRILDHGAISLGDKWDLMYVGMYQNIDWDNNLGTEWWTVGVRPMYKWTPIMSTLLEVGYDNVKSQQTGDRNNQYKITLAQQWQAGDSIWSRPAIRIFATYAKWDEKWGYIKDGDNISRYAAATNSGISTNSRGDSDEWTFGAQMEIWW</sequence>
<proteinExistence type="inferred from homology"/>
<evidence type="ECO:0000255" key="1">
    <source>
        <dbReference type="HAMAP-Rule" id="MF_01301"/>
    </source>
</evidence>
<keyword id="KW-0998">Cell outer membrane</keyword>
<keyword id="KW-0406">Ion transport</keyword>
<keyword id="KW-0472">Membrane</keyword>
<keyword id="KW-0626">Porin</keyword>
<keyword id="KW-0732">Signal</keyword>
<keyword id="KW-0762">Sugar transport</keyword>
<keyword id="KW-0812">Transmembrane</keyword>
<keyword id="KW-1134">Transmembrane beta strand</keyword>
<keyword id="KW-0813">Transport</keyword>
<feature type="signal peptide" evidence="1">
    <location>
        <begin position="1"/>
        <end position="25"/>
    </location>
</feature>
<feature type="chain" id="PRO_1000165294" description="Maltoporin">
    <location>
        <begin position="26"/>
        <end position="452"/>
    </location>
</feature>
<feature type="site" description="Greasy slide, important in sugar transport" evidence="1">
    <location>
        <position position="31"/>
    </location>
</feature>
<feature type="site" description="Greasy slide, important in sugar transport" evidence="1">
    <location>
        <position position="66"/>
    </location>
</feature>
<feature type="site" description="Greasy slide, important in sugar transport" evidence="1">
    <location>
        <position position="99"/>
    </location>
</feature>
<feature type="site" description="Important in sugar transport" evidence="1">
    <location>
        <position position="143"/>
    </location>
</feature>
<feature type="site" description="Greasy slide, important in sugar transport" evidence="1">
    <location>
        <position position="252"/>
    </location>
</feature>
<feature type="site" description="Greasy slide, important in sugar transport" evidence="1">
    <location>
        <position position="393"/>
    </location>
</feature>
<feature type="site" description="Greasy slide, important in sugar transport" evidence="1">
    <location>
        <position position="451"/>
    </location>
</feature>